<sequence>MLLIIDLQTAFINWFVGLGVSKDISAALWIPLPILVVIVGATIGVLVIVWLERKISAGVQQRIGPEFAGPLGVLQPLADGLKLVFKEDIIPSKADIWLFTLGPALVVIPVFLAYLVVPFGHDLVVADISLGVFFWIAISSIAPIGLLMSGYGSNNKYSFLGGLRAAAQAISYEIPLSLCVLAICLLSNSLSTVEIVEQQSAYGILGWNVWRQPIGFVSFLIAALAECERLPFDLPEAEEELVAGYQTEYSGMKFGLFYVGSYVNLLLSSLFATILYLGGWTSPITFSIPFQTSEIEIFAAFLGIGMTLLKAYLFIFLSILTRWTLPRVRIDQLLDLGWKFLLPISLGNLLLTASLRLAFY</sequence>
<dbReference type="EC" id="7.1.1.-" evidence="1"/>
<dbReference type="EMBL" id="DQ422812">
    <property type="protein sequence ID" value="ABD62189.2"/>
    <property type="molecule type" value="Genomic_DNA"/>
</dbReference>
<dbReference type="RefSeq" id="YP_001019162.1">
    <property type="nucleotide sequence ID" value="NC_008822.1"/>
</dbReference>
<dbReference type="SMR" id="Q19V58"/>
<dbReference type="GeneID" id="4783215"/>
<dbReference type="GO" id="GO:0009535">
    <property type="term" value="C:chloroplast thylakoid membrane"/>
    <property type="evidence" value="ECO:0007669"/>
    <property type="project" value="UniProtKB-SubCell"/>
</dbReference>
<dbReference type="GO" id="GO:0003954">
    <property type="term" value="F:NADH dehydrogenase activity"/>
    <property type="evidence" value="ECO:0007669"/>
    <property type="project" value="TreeGrafter"/>
</dbReference>
<dbReference type="GO" id="GO:0016655">
    <property type="term" value="F:oxidoreductase activity, acting on NAD(P)H, quinone or similar compound as acceptor"/>
    <property type="evidence" value="ECO:0007669"/>
    <property type="project" value="UniProtKB-UniRule"/>
</dbReference>
<dbReference type="GO" id="GO:0048038">
    <property type="term" value="F:quinone binding"/>
    <property type="evidence" value="ECO:0007669"/>
    <property type="project" value="UniProtKB-KW"/>
</dbReference>
<dbReference type="GO" id="GO:0009060">
    <property type="term" value="P:aerobic respiration"/>
    <property type="evidence" value="ECO:0007669"/>
    <property type="project" value="TreeGrafter"/>
</dbReference>
<dbReference type="GO" id="GO:0019684">
    <property type="term" value="P:photosynthesis, light reaction"/>
    <property type="evidence" value="ECO:0007669"/>
    <property type="project" value="UniProtKB-UniRule"/>
</dbReference>
<dbReference type="HAMAP" id="MF_01350">
    <property type="entry name" value="NDH1_NuoH"/>
    <property type="match status" value="1"/>
</dbReference>
<dbReference type="InterPro" id="IPR001694">
    <property type="entry name" value="NADH_UbQ_OxRdtase_su1/FPO"/>
</dbReference>
<dbReference type="InterPro" id="IPR018086">
    <property type="entry name" value="NADH_UbQ_OxRdtase_su1_CS"/>
</dbReference>
<dbReference type="NCBIfam" id="NF004741">
    <property type="entry name" value="PRK06076.1-2"/>
    <property type="match status" value="1"/>
</dbReference>
<dbReference type="NCBIfam" id="NF004744">
    <property type="entry name" value="PRK06076.1-5"/>
    <property type="match status" value="1"/>
</dbReference>
<dbReference type="PANTHER" id="PTHR11432">
    <property type="entry name" value="NADH DEHYDROGENASE SUBUNIT 1"/>
    <property type="match status" value="1"/>
</dbReference>
<dbReference type="PANTHER" id="PTHR11432:SF3">
    <property type="entry name" value="NADH-UBIQUINONE OXIDOREDUCTASE CHAIN 1"/>
    <property type="match status" value="1"/>
</dbReference>
<dbReference type="Pfam" id="PF00146">
    <property type="entry name" value="NADHdh"/>
    <property type="match status" value="1"/>
</dbReference>
<dbReference type="PROSITE" id="PS00667">
    <property type="entry name" value="COMPLEX1_ND1_1"/>
    <property type="match status" value="1"/>
</dbReference>
<dbReference type="PROSITE" id="PS00668">
    <property type="entry name" value="COMPLEX1_ND1_2"/>
    <property type="match status" value="1"/>
</dbReference>
<feature type="chain" id="PRO_0000298868" description="NAD(P)H-quinone oxidoreductase subunit 1, chloroplastic">
    <location>
        <begin position="1"/>
        <end position="360"/>
    </location>
</feature>
<feature type="transmembrane region" description="Helical" evidence="1">
    <location>
        <begin position="29"/>
        <end position="49"/>
    </location>
</feature>
<feature type="transmembrane region" description="Helical" evidence="1">
    <location>
        <begin position="96"/>
        <end position="116"/>
    </location>
</feature>
<feature type="transmembrane region" description="Helical" evidence="1">
    <location>
        <begin position="128"/>
        <end position="148"/>
    </location>
</feature>
<feature type="transmembrane region" description="Helical" evidence="1">
    <location>
        <begin position="166"/>
        <end position="186"/>
    </location>
</feature>
<feature type="transmembrane region" description="Helical" evidence="1">
    <location>
        <begin position="204"/>
        <end position="224"/>
    </location>
</feature>
<feature type="transmembrane region" description="Helical" evidence="1">
    <location>
        <begin position="255"/>
        <end position="277"/>
    </location>
</feature>
<feature type="transmembrane region" description="Helical" evidence="1">
    <location>
        <begin position="297"/>
        <end position="317"/>
    </location>
</feature>
<feature type="transmembrane region" description="Helical" evidence="1">
    <location>
        <begin position="333"/>
        <end position="353"/>
    </location>
</feature>
<name>NU1C_CHLAT</name>
<evidence type="ECO:0000255" key="1">
    <source>
        <dbReference type="HAMAP-Rule" id="MF_01350"/>
    </source>
</evidence>
<proteinExistence type="inferred from homology"/>
<keyword id="KW-0150">Chloroplast</keyword>
<keyword id="KW-0472">Membrane</keyword>
<keyword id="KW-0520">NAD</keyword>
<keyword id="KW-0521">NADP</keyword>
<keyword id="KW-0934">Plastid</keyword>
<keyword id="KW-0618">Plastoquinone</keyword>
<keyword id="KW-0874">Quinone</keyword>
<keyword id="KW-0793">Thylakoid</keyword>
<keyword id="KW-1278">Translocase</keyword>
<keyword id="KW-0812">Transmembrane</keyword>
<keyword id="KW-1133">Transmembrane helix</keyword>
<organism>
    <name type="scientific">Chlorokybus atmophyticus</name>
    <name type="common">Soil alga</name>
    <dbReference type="NCBI Taxonomy" id="3144"/>
    <lineage>
        <taxon>Eukaryota</taxon>
        <taxon>Viridiplantae</taxon>
        <taxon>Streptophyta</taxon>
        <taxon>Chlorokybophyceae</taxon>
        <taxon>Chlorokybales</taxon>
        <taxon>Chlorokybaceae</taxon>
        <taxon>Chlorokybus</taxon>
    </lineage>
</organism>
<reference key="1">
    <citation type="journal article" date="2007" name="BMC Biol.">
        <title>A clade uniting the green algae Mesostigma viride and Chlorokybus atmophyticus represents the deepest branch of the Streptophyta in chloroplast genome-based phylogenies.</title>
        <authorList>
            <person name="Lemieux C."/>
            <person name="Otis C."/>
            <person name="Turmel M."/>
        </authorList>
    </citation>
    <scope>NUCLEOTIDE SEQUENCE [LARGE SCALE GENOMIC DNA]</scope>
    <source>
        <strain>SAG 48.80</strain>
    </source>
</reference>
<accession>Q19V58</accession>
<comment type="function">
    <text evidence="1">NDH shuttles electrons from NAD(P)H:plastoquinone, via FMN and iron-sulfur (Fe-S) centers, to quinones in the photosynthetic chain and possibly in a chloroplast respiratory chain. The immediate electron acceptor for the enzyme in this species is believed to be plastoquinone. Couples the redox reaction to proton translocation, and thus conserves the redox energy in a proton gradient.</text>
</comment>
<comment type="catalytic activity">
    <reaction evidence="1">
        <text>a plastoquinone + NADH + (n+1) H(+)(in) = a plastoquinol + NAD(+) + n H(+)(out)</text>
        <dbReference type="Rhea" id="RHEA:42608"/>
        <dbReference type="Rhea" id="RHEA-COMP:9561"/>
        <dbReference type="Rhea" id="RHEA-COMP:9562"/>
        <dbReference type="ChEBI" id="CHEBI:15378"/>
        <dbReference type="ChEBI" id="CHEBI:17757"/>
        <dbReference type="ChEBI" id="CHEBI:57540"/>
        <dbReference type="ChEBI" id="CHEBI:57945"/>
        <dbReference type="ChEBI" id="CHEBI:62192"/>
    </reaction>
</comment>
<comment type="catalytic activity">
    <reaction evidence="1">
        <text>a plastoquinone + NADPH + (n+1) H(+)(in) = a plastoquinol + NADP(+) + n H(+)(out)</text>
        <dbReference type="Rhea" id="RHEA:42612"/>
        <dbReference type="Rhea" id="RHEA-COMP:9561"/>
        <dbReference type="Rhea" id="RHEA-COMP:9562"/>
        <dbReference type="ChEBI" id="CHEBI:15378"/>
        <dbReference type="ChEBI" id="CHEBI:17757"/>
        <dbReference type="ChEBI" id="CHEBI:57783"/>
        <dbReference type="ChEBI" id="CHEBI:58349"/>
        <dbReference type="ChEBI" id="CHEBI:62192"/>
    </reaction>
</comment>
<comment type="subunit">
    <text evidence="1">NDH is composed of at least 16 different subunits, 5 of which are encoded in the nucleus.</text>
</comment>
<comment type="subcellular location">
    <subcellularLocation>
        <location evidence="1">Plastid</location>
        <location evidence="1">Chloroplast thylakoid membrane</location>
        <topology evidence="1">Multi-pass membrane protein</topology>
    </subcellularLocation>
</comment>
<comment type="similarity">
    <text evidence="1">Belongs to the complex I subunit 1 family.</text>
</comment>
<protein>
    <recommendedName>
        <fullName evidence="1">NAD(P)H-quinone oxidoreductase subunit 1, chloroplastic</fullName>
        <ecNumber evidence="1">7.1.1.-</ecNumber>
    </recommendedName>
    <alternativeName>
        <fullName evidence="1">NAD(P)H dehydrogenase subunit 1</fullName>
        <shortName evidence="1">NDH subunit 1</shortName>
    </alternativeName>
    <alternativeName>
        <fullName evidence="1">NADH-plastoquinone oxidoreductase subunit 1</fullName>
    </alternativeName>
</protein>
<geneLocation type="chloroplast"/>
<gene>
    <name evidence="1" type="primary">ndhA</name>
</gene>